<sequence>MQVITSVKEAKQIVKDWKSHQLSIGYVPTMGFLHDGHLSLVKHAKTQDKVIVSIFVNPMQFGPNEDFSSYPRDLERDIKMCQDNGVDMVFIPDATQMYLKNFSTYVDMNTITDKLCGAKRPGHFRGVCTVLTKFFNILNPDIVYMGQKDAQQCVVVRHMVDDLNFDLKIQICPIIREEDGLAKSSRNVYLSKEERKASLAISQSIFLAEKLVREGEKNTSKIIQAMKDILEKEKLIKIDYIELVDFNTMENIENITDNVLGAVAAFVGKTRLIDNFLVQGLK</sequence>
<accession>Q9PIK2</accession>
<accession>Q0PBL2</accession>
<reference key="1">
    <citation type="journal article" date="2000" name="Nature">
        <title>The genome sequence of the food-borne pathogen Campylobacter jejuni reveals hypervariable sequences.</title>
        <authorList>
            <person name="Parkhill J."/>
            <person name="Wren B.W."/>
            <person name="Mungall K.L."/>
            <person name="Ketley J.M."/>
            <person name="Churcher C.M."/>
            <person name="Basham D."/>
            <person name="Chillingworth T."/>
            <person name="Davies R.M."/>
            <person name="Feltwell T."/>
            <person name="Holroyd S."/>
            <person name="Jagels K."/>
            <person name="Karlyshev A.V."/>
            <person name="Moule S."/>
            <person name="Pallen M.J."/>
            <person name="Penn C.W."/>
            <person name="Quail M.A."/>
            <person name="Rajandream M.A."/>
            <person name="Rutherford K.M."/>
            <person name="van Vliet A.H.M."/>
            <person name="Whitehead S."/>
            <person name="Barrell B.G."/>
        </authorList>
    </citation>
    <scope>NUCLEOTIDE SEQUENCE [LARGE SCALE GENOMIC DNA]</scope>
    <source>
        <strain>ATCC 700819 / NCTC 11168</strain>
    </source>
</reference>
<evidence type="ECO:0000255" key="1">
    <source>
        <dbReference type="HAMAP-Rule" id="MF_00158"/>
    </source>
</evidence>
<evidence type="ECO:0007829" key="2">
    <source>
        <dbReference type="PDB" id="3MXT"/>
    </source>
</evidence>
<organism>
    <name type="scientific">Campylobacter jejuni subsp. jejuni serotype O:2 (strain ATCC 700819 / NCTC 11168)</name>
    <dbReference type="NCBI Taxonomy" id="192222"/>
    <lineage>
        <taxon>Bacteria</taxon>
        <taxon>Pseudomonadati</taxon>
        <taxon>Campylobacterota</taxon>
        <taxon>Epsilonproteobacteria</taxon>
        <taxon>Campylobacterales</taxon>
        <taxon>Campylobacteraceae</taxon>
        <taxon>Campylobacter</taxon>
    </lineage>
</organism>
<gene>
    <name evidence="1" type="primary">panC</name>
    <name type="ordered locus">Cj0297c</name>
</gene>
<dbReference type="EC" id="6.3.2.1" evidence="1"/>
<dbReference type="EMBL" id="AL111168">
    <property type="protein sequence ID" value="CAL34448.1"/>
    <property type="molecule type" value="Genomic_DNA"/>
</dbReference>
<dbReference type="PIR" id="E81448">
    <property type="entry name" value="E81448"/>
</dbReference>
<dbReference type="RefSeq" id="WP_002778123.1">
    <property type="nucleotide sequence ID" value="NZ_SZUC01000004.1"/>
</dbReference>
<dbReference type="RefSeq" id="YP_002343735.1">
    <property type="nucleotide sequence ID" value="NC_002163.1"/>
</dbReference>
<dbReference type="PDB" id="3MXT">
    <property type="method" value="X-ray"/>
    <property type="resolution" value="1.85 A"/>
    <property type="chains" value="A=1-282"/>
</dbReference>
<dbReference type="PDB" id="3UY4">
    <property type="method" value="X-ray"/>
    <property type="resolution" value="1.85 A"/>
    <property type="chains" value="A=1-282"/>
</dbReference>
<dbReference type="PDBsum" id="3MXT"/>
<dbReference type="PDBsum" id="3UY4"/>
<dbReference type="SMR" id="Q9PIK2"/>
<dbReference type="IntAct" id="Q9PIK2">
    <property type="interactions" value="30"/>
</dbReference>
<dbReference type="STRING" id="192222.Cj0297c"/>
<dbReference type="PaxDb" id="192222-Cj0297c"/>
<dbReference type="EnsemblBacteria" id="CAL34448">
    <property type="protein sequence ID" value="CAL34448"/>
    <property type="gene ID" value="Cj0297c"/>
</dbReference>
<dbReference type="GeneID" id="66544703"/>
<dbReference type="GeneID" id="904621"/>
<dbReference type="KEGG" id="cje:Cj0297c"/>
<dbReference type="PATRIC" id="fig|192222.6.peg.289"/>
<dbReference type="eggNOG" id="COG0414">
    <property type="taxonomic scope" value="Bacteria"/>
</dbReference>
<dbReference type="HOGENOM" id="CLU_047148_0_0_7"/>
<dbReference type="OrthoDB" id="9773087at2"/>
<dbReference type="UniPathway" id="UPA00028">
    <property type="reaction ID" value="UER00005"/>
</dbReference>
<dbReference type="EvolutionaryTrace" id="Q9PIK2"/>
<dbReference type="Proteomes" id="UP000000799">
    <property type="component" value="Chromosome"/>
</dbReference>
<dbReference type="GO" id="GO:0005829">
    <property type="term" value="C:cytosol"/>
    <property type="evidence" value="ECO:0007669"/>
    <property type="project" value="TreeGrafter"/>
</dbReference>
<dbReference type="GO" id="GO:0005524">
    <property type="term" value="F:ATP binding"/>
    <property type="evidence" value="ECO:0007669"/>
    <property type="project" value="UniProtKB-KW"/>
</dbReference>
<dbReference type="GO" id="GO:0004592">
    <property type="term" value="F:pantoate-beta-alanine ligase activity"/>
    <property type="evidence" value="ECO:0007669"/>
    <property type="project" value="UniProtKB-UniRule"/>
</dbReference>
<dbReference type="GO" id="GO:0015940">
    <property type="term" value="P:pantothenate biosynthetic process"/>
    <property type="evidence" value="ECO:0007669"/>
    <property type="project" value="UniProtKB-UniRule"/>
</dbReference>
<dbReference type="CDD" id="cd00560">
    <property type="entry name" value="PanC"/>
    <property type="match status" value="1"/>
</dbReference>
<dbReference type="FunFam" id="3.30.1300.10:FF:000001">
    <property type="entry name" value="Pantothenate synthetase"/>
    <property type="match status" value="1"/>
</dbReference>
<dbReference type="FunFam" id="3.40.50.620:FF:000013">
    <property type="entry name" value="Pantothenate synthetase"/>
    <property type="match status" value="1"/>
</dbReference>
<dbReference type="Gene3D" id="3.40.50.620">
    <property type="entry name" value="HUPs"/>
    <property type="match status" value="1"/>
</dbReference>
<dbReference type="Gene3D" id="3.30.1300.10">
    <property type="entry name" value="Pantoate-beta-alanine ligase, C-terminal domain"/>
    <property type="match status" value="1"/>
</dbReference>
<dbReference type="HAMAP" id="MF_00158">
    <property type="entry name" value="PanC"/>
    <property type="match status" value="1"/>
</dbReference>
<dbReference type="InterPro" id="IPR003721">
    <property type="entry name" value="Pantoate_ligase"/>
</dbReference>
<dbReference type="InterPro" id="IPR042176">
    <property type="entry name" value="Pantoate_ligase_C"/>
</dbReference>
<dbReference type="InterPro" id="IPR014729">
    <property type="entry name" value="Rossmann-like_a/b/a_fold"/>
</dbReference>
<dbReference type="NCBIfam" id="TIGR00018">
    <property type="entry name" value="panC"/>
    <property type="match status" value="1"/>
</dbReference>
<dbReference type="PANTHER" id="PTHR21299">
    <property type="entry name" value="CYTIDYLATE KINASE/PANTOATE-BETA-ALANINE LIGASE"/>
    <property type="match status" value="1"/>
</dbReference>
<dbReference type="PANTHER" id="PTHR21299:SF1">
    <property type="entry name" value="PANTOATE--BETA-ALANINE LIGASE"/>
    <property type="match status" value="1"/>
</dbReference>
<dbReference type="Pfam" id="PF02569">
    <property type="entry name" value="Pantoate_ligase"/>
    <property type="match status" value="1"/>
</dbReference>
<dbReference type="SUPFAM" id="SSF52374">
    <property type="entry name" value="Nucleotidylyl transferase"/>
    <property type="match status" value="1"/>
</dbReference>
<proteinExistence type="evidence at protein level"/>
<protein>
    <recommendedName>
        <fullName evidence="1">Pantothenate synthetase</fullName>
        <shortName evidence="1">PS</shortName>
        <ecNumber evidence="1">6.3.2.1</ecNumber>
    </recommendedName>
    <alternativeName>
        <fullName evidence="1">Pantoate--beta-alanine ligase</fullName>
    </alternativeName>
    <alternativeName>
        <fullName evidence="1">Pantoate-activating enzyme</fullName>
    </alternativeName>
</protein>
<name>PANC_CAMJE</name>
<comment type="function">
    <text evidence="1">Catalyzes the condensation of pantoate with beta-alanine in an ATP-dependent reaction via a pantoyl-adenylate intermediate.</text>
</comment>
<comment type="catalytic activity">
    <reaction evidence="1">
        <text>(R)-pantoate + beta-alanine + ATP = (R)-pantothenate + AMP + diphosphate + H(+)</text>
        <dbReference type="Rhea" id="RHEA:10912"/>
        <dbReference type="ChEBI" id="CHEBI:15378"/>
        <dbReference type="ChEBI" id="CHEBI:15980"/>
        <dbReference type="ChEBI" id="CHEBI:29032"/>
        <dbReference type="ChEBI" id="CHEBI:30616"/>
        <dbReference type="ChEBI" id="CHEBI:33019"/>
        <dbReference type="ChEBI" id="CHEBI:57966"/>
        <dbReference type="ChEBI" id="CHEBI:456215"/>
        <dbReference type="EC" id="6.3.2.1"/>
    </reaction>
</comment>
<comment type="pathway">
    <text evidence="1">Cofactor biosynthesis; (R)-pantothenate biosynthesis; (R)-pantothenate from (R)-pantoate and beta-alanine: step 1/1.</text>
</comment>
<comment type="subunit">
    <text evidence="1">Homodimer.</text>
</comment>
<comment type="subcellular location">
    <subcellularLocation>
        <location evidence="1">Cytoplasm</location>
    </subcellularLocation>
</comment>
<comment type="miscellaneous">
    <text evidence="1">The reaction proceeds by a bi uni uni bi ping pong mechanism.</text>
</comment>
<comment type="similarity">
    <text evidence="1">Belongs to the pantothenate synthetase family.</text>
</comment>
<feature type="chain" id="PRO_0000128216" description="Pantothenate synthetase">
    <location>
        <begin position="1"/>
        <end position="282"/>
    </location>
</feature>
<feature type="active site" description="Proton donor" evidence="1">
    <location>
        <position position="37"/>
    </location>
</feature>
<feature type="binding site" evidence="1">
    <location>
        <begin position="30"/>
        <end position="37"/>
    </location>
    <ligand>
        <name>ATP</name>
        <dbReference type="ChEBI" id="CHEBI:30616"/>
    </ligand>
</feature>
<feature type="binding site" evidence="1">
    <location>
        <position position="60"/>
    </location>
    <ligand>
        <name>(R)-pantoate</name>
        <dbReference type="ChEBI" id="CHEBI:15980"/>
    </ligand>
</feature>
<feature type="binding site" evidence="1">
    <location>
        <position position="60"/>
    </location>
    <ligand>
        <name>beta-alanine</name>
        <dbReference type="ChEBI" id="CHEBI:57966"/>
    </ligand>
</feature>
<feature type="binding site" evidence="1">
    <location>
        <begin position="146"/>
        <end position="149"/>
    </location>
    <ligand>
        <name>ATP</name>
        <dbReference type="ChEBI" id="CHEBI:30616"/>
    </ligand>
</feature>
<feature type="binding site" evidence="1">
    <location>
        <position position="152"/>
    </location>
    <ligand>
        <name>(R)-pantoate</name>
        <dbReference type="ChEBI" id="CHEBI:15980"/>
    </ligand>
</feature>
<feature type="binding site" evidence="1">
    <location>
        <position position="175"/>
    </location>
    <ligand>
        <name>ATP</name>
        <dbReference type="ChEBI" id="CHEBI:30616"/>
    </ligand>
</feature>
<feature type="binding site" evidence="1">
    <location>
        <begin position="183"/>
        <end position="186"/>
    </location>
    <ligand>
        <name>ATP</name>
        <dbReference type="ChEBI" id="CHEBI:30616"/>
    </ligand>
</feature>
<feature type="strand" evidence="2">
    <location>
        <begin position="2"/>
        <end position="4"/>
    </location>
</feature>
<feature type="helix" evidence="2">
    <location>
        <begin position="7"/>
        <end position="19"/>
    </location>
</feature>
<feature type="strand" evidence="2">
    <location>
        <begin position="24"/>
        <end position="29"/>
    </location>
</feature>
<feature type="helix" evidence="2">
    <location>
        <begin position="35"/>
        <end position="44"/>
    </location>
</feature>
<feature type="strand" evidence="2">
    <location>
        <begin position="47"/>
        <end position="54"/>
    </location>
</feature>
<feature type="helix" evidence="2">
    <location>
        <begin position="58"/>
        <end position="60"/>
    </location>
</feature>
<feature type="turn" evidence="2">
    <location>
        <begin position="67"/>
        <end position="69"/>
    </location>
</feature>
<feature type="helix" evidence="2">
    <location>
        <begin position="74"/>
        <end position="83"/>
    </location>
</feature>
<feature type="strand" evidence="2">
    <location>
        <begin position="87"/>
        <end position="90"/>
    </location>
</feature>
<feature type="helix" evidence="2">
    <location>
        <begin position="94"/>
        <end position="97"/>
    </location>
</feature>
<feature type="strand" evidence="2">
    <location>
        <begin position="109"/>
        <end position="111"/>
    </location>
</feature>
<feature type="helix" evidence="2">
    <location>
        <begin position="115"/>
        <end position="119"/>
    </location>
</feature>
<feature type="helix" evidence="2">
    <location>
        <begin position="123"/>
        <end position="138"/>
    </location>
</feature>
<feature type="strand" evidence="2">
    <location>
        <begin position="141"/>
        <end position="146"/>
    </location>
</feature>
<feature type="helix" evidence="2">
    <location>
        <begin position="147"/>
        <end position="149"/>
    </location>
</feature>
<feature type="helix" evidence="2">
    <location>
        <begin position="150"/>
        <end position="162"/>
    </location>
</feature>
<feature type="strand" evidence="2">
    <location>
        <begin position="166"/>
        <end position="172"/>
    </location>
</feature>
<feature type="helix" evidence="2">
    <location>
        <begin position="185"/>
        <end position="189"/>
    </location>
</feature>
<feature type="helix" evidence="2">
    <location>
        <begin position="192"/>
        <end position="213"/>
    </location>
</feature>
<feature type="helix" evidence="2">
    <location>
        <begin position="219"/>
        <end position="231"/>
    </location>
</feature>
<feature type="strand" evidence="2">
    <location>
        <begin position="236"/>
        <end position="244"/>
    </location>
</feature>
<feature type="turn" evidence="2">
    <location>
        <begin position="246"/>
        <end position="248"/>
    </location>
</feature>
<feature type="strand" evidence="2">
    <location>
        <begin position="259"/>
        <end position="267"/>
    </location>
</feature>
<feature type="strand" evidence="2">
    <location>
        <begin position="270"/>
        <end position="278"/>
    </location>
</feature>
<keyword id="KW-0002">3D-structure</keyword>
<keyword id="KW-0067">ATP-binding</keyword>
<keyword id="KW-0963">Cytoplasm</keyword>
<keyword id="KW-0436">Ligase</keyword>
<keyword id="KW-0547">Nucleotide-binding</keyword>
<keyword id="KW-0566">Pantothenate biosynthesis</keyword>
<keyword id="KW-1185">Reference proteome</keyword>